<dbReference type="EC" id="1.2.1.72" evidence="2"/>
<dbReference type="EMBL" id="AE005174">
    <property type="protein sequence ID" value="AAG58053.1"/>
    <property type="molecule type" value="Genomic_DNA"/>
</dbReference>
<dbReference type="EMBL" id="BA000007">
    <property type="protein sequence ID" value="BAB37221.1"/>
    <property type="molecule type" value="Genomic_DNA"/>
</dbReference>
<dbReference type="PIR" id="A85949">
    <property type="entry name" value="A85949"/>
</dbReference>
<dbReference type="PIR" id="F91103">
    <property type="entry name" value="F91103"/>
</dbReference>
<dbReference type="RefSeq" id="NP_311825.1">
    <property type="nucleotide sequence ID" value="NC_002695.1"/>
</dbReference>
<dbReference type="RefSeq" id="WP_000218480.1">
    <property type="nucleotide sequence ID" value="NZ_VOAI01000003.1"/>
</dbReference>
<dbReference type="SMR" id="P0A9B8"/>
<dbReference type="STRING" id="155864.Z4266"/>
<dbReference type="GeneID" id="916383"/>
<dbReference type="GeneID" id="93779071"/>
<dbReference type="KEGG" id="ece:Z4266"/>
<dbReference type="KEGG" id="ecs:ECs_3798"/>
<dbReference type="PATRIC" id="fig|386585.9.peg.3964"/>
<dbReference type="eggNOG" id="COG0057">
    <property type="taxonomic scope" value="Bacteria"/>
</dbReference>
<dbReference type="HOGENOM" id="CLU_030140_0_2_6"/>
<dbReference type="OMA" id="ENMVKIM"/>
<dbReference type="UniPathway" id="UPA00244">
    <property type="reaction ID" value="UER00309"/>
</dbReference>
<dbReference type="Proteomes" id="UP000000558">
    <property type="component" value="Chromosome"/>
</dbReference>
<dbReference type="Proteomes" id="UP000002519">
    <property type="component" value="Chromosome"/>
</dbReference>
<dbReference type="GO" id="GO:0005737">
    <property type="term" value="C:cytoplasm"/>
    <property type="evidence" value="ECO:0007669"/>
    <property type="project" value="UniProtKB-SubCell"/>
</dbReference>
<dbReference type="GO" id="GO:0048001">
    <property type="term" value="F:erythrose-4-phosphate dehydrogenase activity"/>
    <property type="evidence" value="ECO:0007669"/>
    <property type="project" value="UniProtKB-UniRule"/>
</dbReference>
<dbReference type="GO" id="GO:0051287">
    <property type="term" value="F:NAD binding"/>
    <property type="evidence" value="ECO:0007669"/>
    <property type="project" value="InterPro"/>
</dbReference>
<dbReference type="GO" id="GO:0042823">
    <property type="term" value="P:pyridoxal phosphate biosynthetic process"/>
    <property type="evidence" value="ECO:0007669"/>
    <property type="project" value="UniProtKB-UniRule"/>
</dbReference>
<dbReference type="GO" id="GO:0008615">
    <property type="term" value="P:pyridoxine biosynthetic process"/>
    <property type="evidence" value="ECO:0007669"/>
    <property type="project" value="UniProtKB-UniRule"/>
</dbReference>
<dbReference type="CDD" id="cd23937">
    <property type="entry name" value="GAPDH_C_E4PDH"/>
    <property type="match status" value="1"/>
</dbReference>
<dbReference type="CDD" id="cd17892">
    <property type="entry name" value="GAPDH_N_E4PDH"/>
    <property type="match status" value="1"/>
</dbReference>
<dbReference type="FunFam" id="3.30.360.10:FF:000007">
    <property type="entry name" value="D-erythrose-4-phosphate dehydrogenase"/>
    <property type="match status" value="1"/>
</dbReference>
<dbReference type="FunFam" id="3.40.50.720:FF:000001">
    <property type="entry name" value="Glyceraldehyde-3-phosphate dehydrogenase"/>
    <property type="match status" value="1"/>
</dbReference>
<dbReference type="Gene3D" id="3.30.360.10">
    <property type="entry name" value="Dihydrodipicolinate Reductase, domain 2"/>
    <property type="match status" value="1"/>
</dbReference>
<dbReference type="Gene3D" id="3.40.50.720">
    <property type="entry name" value="NAD(P)-binding Rossmann-like Domain"/>
    <property type="match status" value="1"/>
</dbReference>
<dbReference type="HAMAP" id="MF_01640">
    <property type="entry name" value="E4P_dehydrog"/>
    <property type="match status" value="1"/>
</dbReference>
<dbReference type="InterPro" id="IPR006422">
    <property type="entry name" value="E4P_DH_bac"/>
</dbReference>
<dbReference type="InterPro" id="IPR020831">
    <property type="entry name" value="GlycerAld/Erythrose_P_DH"/>
</dbReference>
<dbReference type="InterPro" id="IPR020830">
    <property type="entry name" value="GlycerAld_3-P_DH_AS"/>
</dbReference>
<dbReference type="InterPro" id="IPR020829">
    <property type="entry name" value="GlycerAld_3-P_DH_cat"/>
</dbReference>
<dbReference type="InterPro" id="IPR020828">
    <property type="entry name" value="GlycerAld_3-P_DH_NAD(P)-bd"/>
</dbReference>
<dbReference type="InterPro" id="IPR036291">
    <property type="entry name" value="NAD(P)-bd_dom_sf"/>
</dbReference>
<dbReference type="NCBIfam" id="TIGR01532">
    <property type="entry name" value="E4PD_g-proteo"/>
    <property type="match status" value="1"/>
</dbReference>
<dbReference type="NCBIfam" id="NF010058">
    <property type="entry name" value="PRK13535.1"/>
    <property type="match status" value="1"/>
</dbReference>
<dbReference type="PANTHER" id="PTHR43148">
    <property type="entry name" value="GLYCERALDEHYDE-3-PHOSPHATE DEHYDROGENASE 2"/>
    <property type="match status" value="1"/>
</dbReference>
<dbReference type="Pfam" id="PF02800">
    <property type="entry name" value="Gp_dh_C"/>
    <property type="match status" value="1"/>
</dbReference>
<dbReference type="Pfam" id="PF00044">
    <property type="entry name" value="Gp_dh_N"/>
    <property type="match status" value="1"/>
</dbReference>
<dbReference type="PIRSF" id="PIRSF000149">
    <property type="entry name" value="GAP_DH"/>
    <property type="match status" value="1"/>
</dbReference>
<dbReference type="PRINTS" id="PR00078">
    <property type="entry name" value="G3PDHDRGNASE"/>
</dbReference>
<dbReference type="SMART" id="SM00846">
    <property type="entry name" value="Gp_dh_N"/>
    <property type="match status" value="1"/>
</dbReference>
<dbReference type="SUPFAM" id="SSF55347">
    <property type="entry name" value="Glyceraldehyde-3-phosphate dehydrogenase-like, C-terminal domain"/>
    <property type="match status" value="1"/>
</dbReference>
<dbReference type="SUPFAM" id="SSF51735">
    <property type="entry name" value="NAD(P)-binding Rossmann-fold domains"/>
    <property type="match status" value="1"/>
</dbReference>
<dbReference type="PROSITE" id="PS00071">
    <property type="entry name" value="GAPDH"/>
    <property type="match status" value="1"/>
</dbReference>
<protein>
    <recommendedName>
        <fullName evidence="2">D-erythrose-4-phosphate dehydrogenase</fullName>
        <shortName evidence="2">E4PDH</shortName>
        <ecNumber evidence="2">1.2.1.72</ecNumber>
    </recommendedName>
</protein>
<name>E4PD_ECO57</name>
<comment type="function">
    <text evidence="2">Catalyzes the NAD-dependent conversion of D-erythrose 4-phosphate to 4-phosphoerythronate.</text>
</comment>
<comment type="catalytic activity">
    <reaction evidence="2">
        <text>D-erythrose 4-phosphate + NAD(+) + H2O = 4-phospho-D-erythronate + NADH + 2 H(+)</text>
        <dbReference type="Rhea" id="RHEA:12056"/>
        <dbReference type="ChEBI" id="CHEBI:15377"/>
        <dbReference type="ChEBI" id="CHEBI:15378"/>
        <dbReference type="ChEBI" id="CHEBI:16897"/>
        <dbReference type="ChEBI" id="CHEBI:57540"/>
        <dbReference type="ChEBI" id="CHEBI:57945"/>
        <dbReference type="ChEBI" id="CHEBI:58766"/>
        <dbReference type="EC" id="1.2.1.72"/>
    </reaction>
</comment>
<comment type="pathway">
    <text evidence="2">Cofactor biosynthesis; pyridoxine 5'-phosphate biosynthesis; pyridoxine 5'-phosphate from D-erythrose 4-phosphate: step 1/5.</text>
</comment>
<comment type="subunit">
    <text evidence="2">Homotetramer.</text>
</comment>
<comment type="subcellular location">
    <subcellularLocation>
        <location evidence="2">Cytoplasm</location>
    </subcellularLocation>
</comment>
<comment type="similarity">
    <text evidence="2">Belongs to the glyceraldehyde-3-phosphate dehydrogenase family. Epd subfamily.</text>
</comment>
<feature type="initiator methionine" description="Removed" evidence="1">
    <location>
        <position position="1"/>
    </location>
</feature>
<feature type="chain" id="PRO_0000145653" description="D-erythrose-4-phosphate dehydrogenase">
    <location>
        <begin position="2"/>
        <end position="339"/>
    </location>
</feature>
<feature type="active site" description="Nucleophile" evidence="2">
    <location>
        <position position="155"/>
    </location>
</feature>
<feature type="binding site" evidence="2">
    <location>
        <begin position="12"/>
        <end position="13"/>
    </location>
    <ligand>
        <name>NAD(+)</name>
        <dbReference type="ChEBI" id="CHEBI:57540"/>
    </ligand>
</feature>
<feature type="binding site" evidence="2">
    <location>
        <position position="81"/>
    </location>
    <ligand>
        <name>NAD(+)</name>
        <dbReference type="ChEBI" id="CHEBI:57540"/>
    </ligand>
</feature>
<feature type="binding site" evidence="1">
    <location>
        <begin position="154"/>
        <end position="156"/>
    </location>
    <ligand>
        <name>D-glyceraldehyde 3-phosphate</name>
        <dbReference type="ChEBI" id="CHEBI:59776"/>
    </ligand>
</feature>
<feature type="binding site" evidence="2">
    <location>
        <position position="155"/>
    </location>
    <ligand>
        <name>substrate</name>
    </ligand>
</feature>
<feature type="binding site" evidence="1">
    <location>
        <position position="200"/>
    </location>
    <ligand>
        <name>D-glyceraldehyde 3-phosphate</name>
        <dbReference type="ChEBI" id="CHEBI:59776"/>
    </ligand>
</feature>
<feature type="binding site" evidence="1">
    <location>
        <begin position="213"/>
        <end position="214"/>
    </location>
    <ligand>
        <name>D-glyceraldehyde 3-phosphate</name>
        <dbReference type="ChEBI" id="CHEBI:59776"/>
    </ligand>
</feature>
<feature type="binding site" evidence="1">
    <location>
        <position position="236"/>
    </location>
    <ligand>
        <name>D-glyceraldehyde 3-phosphate</name>
        <dbReference type="ChEBI" id="CHEBI:59776"/>
    </ligand>
</feature>
<feature type="binding site" evidence="2">
    <location>
        <position position="318"/>
    </location>
    <ligand>
        <name>NAD(+)</name>
        <dbReference type="ChEBI" id="CHEBI:57540"/>
    </ligand>
</feature>
<feature type="site" description="Activates thiol group during catalysis" evidence="2">
    <location>
        <position position="182"/>
    </location>
</feature>
<evidence type="ECO:0000250" key="1"/>
<evidence type="ECO:0000255" key="2">
    <source>
        <dbReference type="HAMAP-Rule" id="MF_01640"/>
    </source>
</evidence>
<reference key="1">
    <citation type="journal article" date="2001" name="Nature">
        <title>Genome sequence of enterohaemorrhagic Escherichia coli O157:H7.</title>
        <authorList>
            <person name="Perna N.T."/>
            <person name="Plunkett G. III"/>
            <person name="Burland V."/>
            <person name="Mau B."/>
            <person name="Glasner J.D."/>
            <person name="Rose D.J."/>
            <person name="Mayhew G.F."/>
            <person name="Evans P.S."/>
            <person name="Gregor J."/>
            <person name="Kirkpatrick H.A."/>
            <person name="Posfai G."/>
            <person name="Hackett J."/>
            <person name="Klink S."/>
            <person name="Boutin A."/>
            <person name="Shao Y."/>
            <person name="Miller L."/>
            <person name="Grotbeck E.J."/>
            <person name="Davis N.W."/>
            <person name="Lim A."/>
            <person name="Dimalanta E.T."/>
            <person name="Potamousis K."/>
            <person name="Apodaca J."/>
            <person name="Anantharaman T.S."/>
            <person name="Lin J."/>
            <person name="Yen G."/>
            <person name="Schwartz D.C."/>
            <person name="Welch R.A."/>
            <person name="Blattner F.R."/>
        </authorList>
    </citation>
    <scope>NUCLEOTIDE SEQUENCE [LARGE SCALE GENOMIC DNA]</scope>
    <source>
        <strain>O157:H7 / EDL933 / ATCC 700927 / EHEC</strain>
    </source>
</reference>
<reference key="2">
    <citation type="journal article" date="2001" name="DNA Res.">
        <title>Complete genome sequence of enterohemorrhagic Escherichia coli O157:H7 and genomic comparison with a laboratory strain K-12.</title>
        <authorList>
            <person name="Hayashi T."/>
            <person name="Makino K."/>
            <person name="Ohnishi M."/>
            <person name="Kurokawa K."/>
            <person name="Ishii K."/>
            <person name="Yokoyama K."/>
            <person name="Han C.-G."/>
            <person name="Ohtsubo E."/>
            <person name="Nakayama K."/>
            <person name="Murata T."/>
            <person name="Tanaka M."/>
            <person name="Tobe T."/>
            <person name="Iida T."/>
            <person name="Takami H."/>
            <person name="Honda T."/>
            <person name="Sasakawa C."/>
            <person name="Ogasawara N."/>
            <person name="Yasunaga T."/>
            <person name="Kuhara S."/>
            <person name="Shiba T."/>
            <person name="Hattori M."/>
            <person name="Shinagawa H."/>
        </authorList>
    </citation>
    <scope>NUCLEOTIDE SEQUENCE [LARGE SCALE GENOMIC DNA]</scope>
    <source>
        <strain>O157:H7 / Sakai / RIMD 0509952 / EHEC</strain>
    </source>
</reference>
<sequence length="339" mass="37299">MTVRVAINGFGRIGRNVVRALYESGRRAEITVVAINELADAAGMAHLLKYDTSHGRFAWEVRQERDQLFVGDDAIRVLHERSLQSLPWRELGVDVVLDCTGVYGSREHGEAHIAAGAKKVLFSHPGSNDLDATVVYGVNQDQLRAEHRIVSNASCTTNCIIPVIKLLDDAYGIESGTVTTIHSAMHDQQVIDAYHPDLRRTRAASQSIIPVDTKLAAGITRFFPQFNDRFEAIAVRVPTINVTAIDLSVTVKKPVKANEVNLLLQKAAQGAFHGIVDYTELPLVSVDFNHDPHSAIVDGTQTRVSGAHLIKTLVWCDNEWGFANRMLDTTLAMATVAFR</sequence>
<keyword id="KW-0963">Cytoplasm</keyword>
<keyword id="KW-0520">NAD</keyword>
<keyword id="KW-0560">Oxidoreductase</keyword>
<keyword id="KW-0664">Pyridoxine biosynthesis</keyword>
<keyword id="KW-1185">Reference proteome</keyword>
<organism>
    <name type="scientific">Escherichia coli O157:H7</name>
    <dbReference type="NCBI Taxonomy" id="83334"/>
    <lineage>
        <taxon>Bacteria</taxon>
        <taxon>Pseudomonadati</taxon>
        <taxon>Pseudomonadota</taxon>
        <taxon>Gammaproteobacteria</taxon>
        <taxon>Enterobacterales</taxon>
        <taxon>Enterobacteriaceae</taxon>
        <taxon>Escherichia</taxon>
    </lineage>
</organism>
<gene>
    <name evidence="2" type="primary">epd</name>
    <name type="ordered locus">Z4266</name>
    <name type="ordered locus">ECs3798</name>
</gene>
<proteinExistence type="inferred from homology"/>
<accession>P0A9B8</accession>
<accession>P11603</accession>